<protein>
    <recommendedName>
        <fullName evidence="1">Small ribosomal subunit protein uS13</fullName>
    </recommendedName>
    <alternativeName>
        <fullName evidence="3">30S ribosomal protein S13</fullName>
    </alternativeName>
</protein>
<feature type="chain" id="PRO_1000214400" description="Small ribosomal subunit protein uS13">
    <location>
        <begin position="1"/>
        <end position="121"/>
    </location>
</feature>
<feature type="region of interest" description="Disordered" evidence="2">
    <location>
        <begin position="91"/>
        <end position="121"/>
    </location>
</feature>
<feature type="compositionally biased region" description="Basic residues" evidence="2">
    <location>
        <begin position="106"/>
        <end position="121"/>
    </location>
</feature>
<dbReference type="EMBL" id="FM242711">
    <property type="protein sequence ID" value="CAS06330.1"/>
    <property type="molecule type" value="Genomic_DNA"/>
</dbReference>
<dbReference type="RefSeq" id="WP_003723677.1">
    <property type="nucleotide sequence ID" value="NC_012488.1"/>
</dbReference>
<dbReference type="SMR" id="C1KZF7"/>
<dbReference type="GeneID" id="93240489"/>
<dbReference type="KEGG" id="lmc:Lm4b_02575"/>
<dbReference type="HOGENOM" id="CLU_103849_1_1_9"/>
<dbReference type="GO" id="GO:0005829">
    <property type="term" value="C:cytosol"/>
    <property type="evidence" value="ECO:0007669"/>
    <property type="project" value="TreeGrafter"/>
</dbReference>
<dbReference type="GO" id="GO:0015935">
    <property type="term" value="C:small ribosomal subunit"/>
    <property type="evidence" value="ECO:0007669"/>
    <property type="project" value="TreeGrafter"/>
</dbReference>
<dbReference type="GO" id="GO:0019843">
    <property type="term" value="F:rRNA binding"/>
    <property type="evidence" value="ECO:0007669"/>
    <property type="project" value="UniProtKB-UniRule"/>
</dbReference>
<dbReference type="GO" id="GO:0003735">
    <property type="term" value="F:structural constituent of ribosome"/>
    <property type="evidence" value="ECO:0007669"/>
    <property type="project" value="InterPro"/>
</dbReference>
<dbReference type="GO" id="GO:0000049">
    <property type="term" value="F:tRNA binding"/>
    <property type="evidence" value="ECO:0007669"/>
    <property type="project" value="UniProtKB-UniRule"/>
</dbReference>
<dbReference type="GO" id="GO:0006412">
    <property type="term" value="P:translation"/>
    <property type="evidence" value="ECO:0007669"/>
    <property type="project" value="UniProtKB-UniRule"/>
</dbReference>
<dbReference type="FunFam" id="1.10.8.50:FF:000001">
    <property type="entry name" value="30S ribosomal protein S13"/>
    <property type="match status" value="1"/>
</dbReference>
<dbReference type="FunFam" id="4.10.910.10:FF:000001">
    <property type="entry name" value="30S ribosomal protein S13"/>
    <property type="match status" value="1"/>
</dbReference>
<dbReference type="Gene3D" id="1.10.8.50">
    <property type="match status" value="1"/>
</dbReference>
<dbReference type="Gene3D" id="4.10.910.10">
    <property type="entry name" value="30s ribosomal protein s13, domain 2"/>
    <property type="match status" value="1"/>
</dbReference>
<dbReference type="HAMAP" id="MF_01315">
    <property type="entry name" value="Ribosomal_uS13"/>
    <property type="match status" value="1"/>
</dbReference>
<dbReference type="InterPro" id="IPR027437">
    <property type="entry name" value="Rbsml_uS13_C"/>
</dbReference>
<dbReference type="InterPro" id="IPR001892">
    <property type="entry name" value="Ribosomal_uS13"/>
</dbReference>
<dbReference type="InterPro" id="IPR010979">
    <property type="entry name" value="Ribosomal_uS13-like_H2TH"/>
</dbReference>
<dbReference type="InterPro" id="IPR019980">
    <property type="entry name" value="Ribosomal_uS13_bac-type"/>
</dbReference>
<dbReference type="InterPro" id="IPR018269">
    <property type="entry name" value="Ribosomal_uS13_CS"/>
</dbReference>
<dbReference type="NCBIfam" id="TIGR03631">
    <property type="entry name" value="uS13_bact"/>
    <property type="match status" value="1"/>
</dbReference>
<dbReference type="PANTHER" id="PTHR10871">
    <property type="entry name" value="30S RIBOSOMAL PROTEIN S13/40S RIBOSOMAL PROTEIN S18"/>
    <property type="match status" value="1"/>
</dbReference>
<dbReference type="PANTHER" id="PTHR10871:SF1">
    <property type="entry name" value="SMALL RIBOSOMAL SUBUNIT PROTEIN US13M"/>
    <property type="match status" value="1"/>
</dbReference>
<dbReference type="Pfam" id="PF00416">
    <property type="entry name" value="Ribosomal_S13"/>
    <property type="match status" value="1"/>
</dbReference>
<dbReference type="PIRSF" id="PIRSF002134">
    <property type="entry name" value="Ribosomal_S13"/>
    <property type="match status" value="1"/>
</dbReference>
<dbReference type="SUPFAM" id="SSF46946">
    <property type="entry name" value="S13-like H2TH domain"/>
    <property type="match status" value="1"/>
</dbReference>
<dbReference type="PROSITE" id="PS00646">
    <property type="entry name" value="RIBOSOMAL_S13_1"/>
    <property type="match status" value="1"/>
</dbReference>
<dbReference type="PROSITE" id="PS50159">
    <property type="entry name" value="RIBOSOMAL_S13_2"/>
    <property type="match status" value="1"/>
</dbReference>
<name>RS13_LISMC</name>
<evidence type="ECO:0000255" key="1">
    <source>
        <dbReference type="HAMAP-Rule" id="MF_01315"/>
    </source>
</evidence>
<evidence type="ECO:0000256" key="2">
    <source>
        <dbReference type="SAM" id="MobiDB-lite"/>
    </source>
</evidence>
<evidence type="ECO:0000305" key="3"/>
<proteinExistence type="inferred from homology"/>
<comment type="function">
    <text evidence="1">Located at the top of the head of the 30S subunit, it contacts several helices of the 16S rRNA. In the 70S ribosome it contacts the 23S rRNA (bridge B1a) and protein L5 of the 50S subunit (bridge B1b), connecting the 2 subunits; these bridges are implicated in subunit movement. Contacts the tRNAs in the A and P-sites.</text>
</comment>
<comment type="subunit">
    <text evidence="1">Part of the 30S ribosomal subunit. Forms a loose heterodimer with protein S19. Forms two bridges to the 50S subunit in the 70S ribosome.</text>
</comment>
<comment type="similarity">
    <text evidence="1">Belongs to the universal ribosomal protein uS13 family.</text>
</comment>
<reference key="1">
    <citation type="journal article" date="2012" name="BMC Genomics">
        <title>Comparative genomics and transcriptomics of lineages I, II, and III strains of Listeria monocytogenes.</title>
        <authorList>
            <person name="Hain T."/>
            <person name="Ghai R."/>
            <person name="Billion A."/>
            <person name="Kuenne C.T."/>
            <person name="Steinweg C."/>
            <person name="Izar B."/>
            <person name="Mohamed W."/>
            <person name="Mraheil M."/>
            <person name="Domann E."/>
            <person name="Schaffrath S."/>
            <person name="Karst U."/>
            <person name="Goesmann A."/>
            <person name="Oehm S."/>
            <person name="Puhler A."/>
            <person name="Merkl R."/>
            <person name="Vorwerk S."/>
            <person name="Glaser P."/>
            <person name="Garrido P."/>
            <person name="Rusniok C."/>
            <person name="Buchrieser C."/>
            <person name="Goebel W."/>
            <person name="Chakraborty T."/>
        </authorList>
    </citation>
    <scope>NUCLEOTIDE SEQUENCE [LARGE SCALE GENOMIC DNA]</scope>
    <source>
        <strain>CLIP80459</strain>
    </source>
</reference>
<keyword id="KW-0687">Ribonucleoprotein</keyword>
<keyword id="KW-0689">Ribosomal protein</keyword>
<keyword id="KW-0694">RNA-binding</keyword>
<keyword id="KW-0699">rRNA-binding</keyword>
<keyword id="KW-0820">tRNA-binding</keyword>
<organism>
    <name type="scientific">Listeria monocytogenes serotype 4b (strain CLIP80459)</name>
    <dbReference type="NCBI Taxonomy" id="568819"/>
    <lineage>
        <taxon>Bacteria</taxon>
        <taxon>Bacillati</taxon>
        <taxon>Bacillota</taxon>
        <taxon>Bacilli</taxon>
        <taxon>Bacillales</taxon>
        <taxon>Listeriaceae</taxon>
        <taxon>Listeria</taxon>
    </lineage>
</organism>
<accession>C1KZF7</accession>
<gene>
    <name evidence="1" type="primary">rpsM</name>
    <name type="ordered locus">Lm4b_02575</name>
</gene>
<sequence>MARIAGVDVPREKRIVISLTYIYGIGKQTAKEVLAEAGVSEDTRTRDLTEEELGKIREILDRIKVEGDLRREVNLNIKRLIEIGSYRGMRHRRGLPVRGQNTKNNARTRKGPSKTVAGKKK</sequence>